<sequence>MMMMKWIISILTMSIMPVLAYSSSIFRFHSEDVELCYGHLYFDRIYNVVNIKYNPHIPYRYNFINRTLTVDELDDNVFFTHGYFLKHKYGSLNPSLIVSLSGNLKYNDIQCSVNVSCLIKNLATSTSTILTSKHKTYSLHRSTCITIIGYDSIIWYKDINDKYNGIYDFTAICMLIASTLIVTIYVFKKIKMNS</sequence>
<comment type="subcellular location">
    <subcellularLocation>
        <location evidence="3">Host membrane</location>
        <topology evidence="3">Single-pass type I membrane protein</topology>
    </subcellularLocation>
    <subcellularLocation>
        <location evidence="2">Host cell surface</location>
    </subcellularLocation>
</comment>
<comment type="induction">
    <text>Expressed in the late phase of the viral replicative cycle.</text>
</comment>
<comment type="similarity">
    <text evidence="3">Belongs to the orthopoxvirus OPG172 protein family.</text>
</comment>
<name>PG172_VACCW</name>
<dbReference type="EMBL" id="M72474">
    <property type="protein sequence ID" value="AAA48309.1"/>
    <property type="molecule type" value="Genomic_DNA"/>
</dbReference>
<dbReference type="EMBL" id="D11079">
    <property type="protein sequence ID" value="BAA01816.1"/>
    <property type="molecule type" value="Genomic_DNA"/>
</dbReference>
<dbReference type="EMBL" id="AY243312">
    <property type="protein sequence ID" value="AAO89447.1"/>
    <property type="molecule type" value="Genomic_DNA"/>
</dbReference>
<dbReference type="PIR" id="JQ1780">
    <property type="entry name" value="JQ1780"/>
</dbReference>
<dbReference type="RefSeq" id="YP_233050.1">
    <property type="nucleotide sequence ID" value="NC_006998.1"/>
</dbReference>
<dbReference type="iPTMnet" id="P26671"/>
<dbReference type="DNASU" id="3707698"/>
<dbReference type="GeneID" id="3707698"/>
<dbReference type="KEGG" id="vg:3707698"/>
<dbReference type="Proteomes" id="UP000000344">
    <property type="component" value="Genome"/>
</dbReference>
<dbReference type="GO" id="GO:0033644">
    <property type="term" value="C:host cell membrane"/>
    <property type="evidence" value="ECO:0007669"/>
    <property type="project" value="UniProtKB-SubCell"/>
</dbReference>
<dbReference type="GO" id="GO:0044228">
    <property type="term" value="C:host cell surface"/>
    <property type="evidence" value="ECO:0007669"/>
    <property type="project" value="UniProtKB-SubCell"/>
</dbReference>
<dbReference type="GO" id="GO:0016020">
    <property type="term" value="C:membrane"/>
    <property type="evidence" value="ECO:0007669"/>
    <property type="project" value="UniProtKB-KW"/>
</dbReference>
<dbReference type="InterPro" id="IPR009487">
    <property type="entry name" value="Orthopox_A43R"/>
</dbReference>
<dbReference type="Pfam" id="PF06517">
    <property type="entry name" value="Orthopox_A43R"/>
    <property type="match status" value="1"/>
</dbReference>
<protein>
    <recommendedName>
        <fullName>Protein A43</fullName>
    </recommendedName>
</protein>
<proteinExistence type="evidence at protein level"/>
<feature type="signal peptide" evidence="1">
    <location>
        <begin position="1"/>
        <end position="22"/>
    </location>
</feature>
<feature type="chain" id="PRO_0000099332" description="Protein A43">
    <location>
        <begin position="23"/>
        <end position="194"/>
    </location>
</feature>
<feature type="topological domain" description="Extracellular">
    <location>
        <begin position="23"/>
        <end position="165"/>
    </location>
</feature>
<feature type="transmembrane region" description="Helical" evidence="1">
    <location>
        <begin position="166"/>
        <end position="186"/>
    </location>
</feature>
<feature type="topological domain" description="Cytoplasmic">
    <location>
        <begin position="187"/>
        <end position="194"/>
    </location>
</feature>
<feature type="glycosylation site" description="N-linked (GlcNAc...) asparagine; by host" evidence="2">
    <location>
        <position position="65"/>
    </location>
</feature>
<feature type="glycosylation site" description="N-linked (GlcNAc...) asparagine; by host" evidence="2">
    <location>
        <position position="114"/>
    </location>
</feature>
<organism>
    <name type="scientific">Vaccinia virus (strain Western Reserve)</name>
    <name type="common">VACV</name>
    <name type="synonym">Vaccinia virus (strain WR)</name>
    <dbReference type="NCBI Taxonomy" id="10254"/>
    <lineage>
        <taxon>Viruses</taxon>
        <taxon>Varidnaviria</taxon>
        <taxon>Bamfordvirae</taxon>
        <taxon>Nucleocytoviricota</taxon>
        <taxon>Pokkesviricetes</taxon>
        <taxon>Chitovirales</taxon>
        <taxon>Poxviridae</taxon>
        <taxon>Chordopoxvirinae</taxon>
        <taxon>Orthopoxvirus</taxon>
        <taxon>Vaccinia virus</taxon>
    </lineage>
</organism>
<evidence type="ECO:0000255" key="1"/>
<evidence type="ECO:0000269" key="2">
    <source>
    </source>
</evidence>
<evidence type="ECO:0000305" key="3"/>
<organismHost>
    <name type="scientific">Bos taurus</name>
    <name type="common">Bovine</name>
    <dbReference type="NCBI Taxonomy" id="9913"/>
</organismHost>
<reference key="1">
    <citation type="journal article" date="1991" name="J. Virol.">
        <title>Sequence analysis, expression, and deletion of a vaccinia virus gene encoding a homolog of profilin, a eukaryotic actin-binding protein.</title>
        <authorList>
            <person name="Blasco R."/>
            <person name="Cole N.B."/>
            <person name="Moss B."/>
        </authorList>
    </citation>
    <scope>NUCLEOTIDE SEQUENCE [GENOMIC DNA]</scope>
</reference>
<reference key="2">
    <citation type="journal article" date="1991" name="J. Gen. Virol.">
        <title>Nucleotide sequence of 42 kbp of vaccinia virus strain WR from near the right inverted terminal repeat.</title>
        <authorList>
            <person name="Smith G.L."/>
            <person name="Chan Y.S."/>
            <person name="Howard S.T."/>
        </authorList>
    </citation>
    <scope>NUCLEOTIDE SEQUENCE [GENOMIC DNA]</scope>
</reference>
<reference key="3">
    <citation type="submission" date="2003-02" db="EMBL/GenBank/DDBJ databases">
        <title>Sequencing of the coding region of Vaccinia-WR to an average 9-fold redundancy and an error rate of 0.16/10kb.</title>
        <authorList>
            <person name="Esposito J.J."/>
            <person name="Frace A.M."/>
            <person name="Sammons S.A."/>
            <person name="Olsen-Rasmussen M."/>
            <person name="Osborne J."/>
            <person name="Wohlhueter R."/>
        </authorList>
    </citation>
    <scope>NUCLEOTIDE SEQUENCE [LARGE SCALE GENOMIC DNA]</scope>
</reference>
<reference key="4">
    <citation type="journal article" date="2010" name="Virology">
        <title>Vaccinia virus A43R gene encodes an orthopoxvirus-specific late non-virion type-1 membrane protein that is dispensable for replication but enhances intradermal lesion formation.</title>
        <authorList>
            <person name="Sood C.L."/>
            <person name="Moss B."/>
        </authorList>
    </citation>
    <scope>SUBCELLULAR LOCATION</scope>
    <scope>GLYCOSYLATION AT ASN-65 AND ASN-114</scope>
</reference>
<keyword id="KW-0325">Glycoprotein</keyword>
<keyword id="KW-1043">Host membrane</keyword>
<keyword id="KW-0426">Late protein</keyword>
<keyword id="KW-0472">Membrane</keyword>
<keyword id="KW-1185">Reference proteome</keyword>
<keyword id="KW-0732">Signal</keyword>
<keyword id="KW-0812">Transmembrane</keyword>
<keyword id="KW-1133">Transmembrane helix</keyword>
<accession>P26671</accession>
<accession>Q76ZN4</accession>
<gene>
    <name type="primary">OPG172</name>
    <name type="ordered locus">VACWR168</name>
    <name type="ORF">A43R</name>
</gene>